<evidence type="ECO:0000255" key="1">
    <source>
        <dbReference type="HAMAP-Rule" id="MF_00109"/>
    </source>
</evidence>
<reference key="1">
    <citation type="submission" date="2008-10" db="EMBL/GenBank/DDBJ databases">
        <title>The complete genome sequence of Helicobacter pylori strain P12.</title>
        <authorList>
            <person name="Fischer W."/>
            <person name="Windhager L."/>
            <person name="Karnholz A."/>
            <person name="Zeiller M."/>
            <person name="Zimmer R."/>
            <person name="Haas R."/>
        </authorList>
    </citation>
    <scope>NUCLEOTIDE SEQUENCE [LARGE SCALE GENOMIC DNA]</scope>
    <source>
        <strain>P12</strain>
    </source>
</reference>
<comment type="function">
    <text evidence="1">Catalyzes the specific phosphorylation of the 3-hydroxyl group of shikimic acid using ATP as a cosubstrate.</text>
</comment>
<comment type="catalytic activity">
    <reaction evidence="1">
        <text>shikimate + ATP = 3-phosphoshikimate + ADP + H(+)</text>
        <dbReference type="Rhea" id="RHEA:13121"/>
        <dbReference type="ChEBI" id="CHEBI:15378"/>
        <dbReference type="ChEBI" id="CHEBI:30616"/>
        <dbReference type="ChEBI" id="CHEBI:36208"/>
        <dbReference type="ChEBI" id="CHEBI:145989"/>
        <dbReference type="ChEBI" id="CHEBI:456216"/>
        <dbReference type="EC" id="2.7.1.71"/>
    </reaction>
</comment>
<comment type="cofactor">
    <cofactor evidence="1">
        <name>Mg(2+)</name>
        <dbReference type="ChEBI" id="CHEBI:18420"/>
    </cofactor>
    <text evidence="1">Binds 1 Mg(2+) ion per subunit.</text>
</comment>
<comment type="pathway">
    <text evidence="1">Metabolic intermediate biosynthesis; chorismate biosynthesis; chorismate from D-erythrose 4-phosphate and phosphoenolpyruvate: step 5/7.</text>
</comment>
<comment type="subunit">
    <text evidence="1">Monomer.</text>
</comment>
<comment type="subcellular location">
    <subcellularLocation>
        <location evidence="1">Cytoplasm</location>
    </subcellularLocation>
</comment>
<comment type="similarity">
    <text evidence="1">Belongs to the shikimate kinase family.</text>
</comment>
<keyword id="KW-0028">Amino-acid biosynthesis</keyword>
<keyword id="KW-0057">Aromatic amino acid biosynthesis</keyword>
<keyword id="KW-0067">ATP-binding</keyword>
<keyword id="KW-0963">Cytoplasm</keyword>
<keyword id="KW-0418">Kinase</keyword>
<keyword id="KW-0460">Magnesium</keyword>
<keyword id="KW-0479">Metal-binding</keyword>
<keyword id="KW-0547">Nucleotide-binding</keyword>
<keyword id="KW-0808">Transferase</keyword>
<organism>
    <name type="scientific">Helicobacter pylori (strain P12)</name>
    <dbReference type="NCBI Taxonomy" id="570508"/>
    <lineage>
        <taxon>Bacteria</taxon>
        <taxon>Pseudomonadati</taxon>
        <taxon>Campylobacterota</taxon>
        <taxon>Epsilonproteobacteria</taxon>
        <taxon>Campylobacterales</taxon>
        <taxon>Helicobacteraceae</taxon>
        <taxon>Helicobacter</taxon>
    </lineage>
</organism>
<accession>B6JPQ5</accession>
<dbReference type="EC" id="2.7.1.71" evidence="1"/>
<dbReference type="EMBL" id="CP001217">
    <property type="protein sequence ID" value="ACJ07316.1"/>
    <property type="molecule type" value="Genomic_DNA"/>
</dbReference>
<dbReference type="SMR" id="B6JPQ5"/>
<dbReference type="KEGG" id="hpp:HPP12_0156"/>
<dbReference type="HOGENOM" id="CLU_057607_4_0_7"/>
<dbReference type="UniPathway" id="UPA00053">
    <property type="reaction ID" value="UER00088"/>
</dbReference>
<dbReference type="Proteomes" id="UP000008198">
    <property type="component" value="Chromosome"/>
</dbReference>
<dbReference type="GO" id="GO:0005829">
    <property type="term" value="C:cytosol"/>
    <property type="evidence" value="ECO:0007669"/>
    <property type="project" value="TreeGrafter"/>
</dbReference>
<dbReference type="GO" id="GO:0005524">
    <property type="term" value="F:ATP binding"/>
    <property type="evidence" value="ECO:0007669"/>
    <property type="project" value="UniProtKB-UniRule"/>
</dbReference>
<dbReference type="GO" id="GO:0000287">
    <property type="term" value="F:magnesium ion binding"/>
    <property type="evidence" value="ECO:0007669"/>
    <property type="project" value="UniProtKB-UniRule"/>
</dbReference>
<dbReference type="GO" id="GO:0004765">
    <property type="term" value="F:shikimate kinase activity"/>
    <property type="evidence" value="ECO:0007669"/>
    <property type="project" value="UniProtKB-UniRule"/>
</dbReference>
<dbReference type="GO" id="GO:0008652">
    <property type="term" value="P:amino acid biosynthetic process"/>
    <property type="evidence" value="ECO:0007669"/>
    <property type="project" value="UniProtKB-KW"/>
</dbReference>
<dbReference type="GO" id="GO:0009073">
    <property type="term" value="P:aromatic amino acid family biosynthetic process"/>
    <property type="evidence" value="ECO:0007669"/>
    <property type="project" value="UniProtKB-KW"/>
</dbReference>
<dbReference type="GO" id="GO:0009423">
    <property type="term" value="P:chorismate biosynthetic process"/>
    <property type="evidence" value="ECO:0007669"/>
    <property type="project" value="UniProtKB-UniRule"/>
</dbReference>
<dbReference type="CDD" id="cd00464">
    <property type="entry name" value="SK"/>
    <property type="match status" value="1"/>
</dbReference>
<dbReference type="FunFam" id="3.40.50.300:FF:001487">
    <property type="entry name" value="Shikimate kinase"/>
    <property type="match status" value="1"/>
</dbReference>
<dbReference type="Gene3D" id="3.40.50.300">
    <property type="entry name" value="P-loop containing nucleotide triphosphate hydrolases"/>
    <property type="match status" value="1"/>
</dbReference>
<dbReference type="HAMAP" id="MF_00109">
    <property type="entry name" value="Shikimate_kinase"/>
    <property type="match status" value="1"/>
</dbReference>
<dbReference type="InterPro" id="IPR027417">
    <property type="entry name" value="P-loop_NTPase"/>
</dbReference>
<dbReference type="InterPro" id="IPR031322">
    <property type="entry name" value="Shikimate/glucono_kinase"/>
</dbReference>
<dbReference type="InterPro" id="IPR000623">
    <property type="entry name" value="Shikimate_kinase/TSH1"/>
</dbReference>
<dbReference type="InterPro" id="IPR023000">
    <property type="entry name" value="Shikimate_kinase_CS"/>
</dbReference>
<dbReference type="PANTHER" id="PTHR21087">
    <property type="entry name" value="SHIKIMATE KINASE"/>
    <property type="match status" value="1"/>
</dbReference>
<dbReference type="PANTHER" id="PTHR21087:SF16">
    <property type="entry name" value="SHIKIMATE KINASE 1, CHLOROPLASTIC"/>
    <property type="match status" value="1"/>
</dbReference>
<dbReference type="Pfam" id="PF01202">
    <property type="entry name" value="SKI"/>
    <property type="match status" value="1"/>
</dbReference>
<dbReference type="PRINTS" id="PR01100">
    <property type="entry name" value="SHIKIMTKNASE"/>
</dbReference>
<dbReference type="SUPFAM" id="SSF52540">
    <property type="entry name" value="P-loop containing nucleoside triphosphate hydrolases"/>
    <property type="match status" value="1"/>
</dbReference>
<dbReference type="PROSITE" id="PS01128">
    <property type="entry name" value="SHIKIMATE_KINASE"/>
    <property type="match status" value="1"/>
</dbReference>
<sequence>MQHLVLIGFMGSGKSSLAQELGLALKLEVLDTDMIISERVGLSVREIFEELGEDNFRMFEKNLIDELKTLKTPHVISTGGGIVMHDNLKGLGTTFYLKMDFETLIKRLNQKEREKRPLLNDLTQAKELFEKRQALYEKNASFIIDARGGLNNSLKQVLQFIA</sequence>
<gene>
    <name evidence="1" type="primary">aroK</name>
    <name type="ordered locus">HPP12_0156</name>
</gene>
<protein>
    <recommendedName>
        <fullName evidence="1">Shikimate kinase</fullName>
        <shortName evidence="1">SK</shortName>
        <ecNumber evidence="1">2.7.1.71</ecNumber>
    </recommendedName>
</protein>
<proteinExistence type="inferred from homology"/>
<name>AROK_HELP2</name>
<feature type="chain" id="PRO_1000094393" description="Shikimate kinase">
    <location>
        <begin position="1"/>
        <end position="162"/>
    </location>
</feature>
<feature type="binding site" evidence="1">
    <location>
        <begin position="11"/>
        <end position="16"/>
    </location>
    <ligand>
        <name>ATP</name>
        <dbReference type="ChEBI" id="CHEBI:30616"/>
    </ligand>
</feature>
<feature type="binding site" evidence="1">
    <location>
        <position position="15"/>
    </location>
    <ligand>
        <name>Mg(2+)</name>
        <dbReference type="ChEBI" id="CHEBI:18420"/>
    </ligand>
</feature>
<feature type="binding site" evidence="1">
    <location>
        <position position="33"/>
    </location>
    <ligand>
        <name>substrate</name>
    </ligand>
</feature>
<feature type="binding site" evidence="1">
    <location>
        <position position="57"/>
    </location>
    <ligand>
        <name>substrate</name>
    </ligand>
</feature>
<feature type="binding site" evidence="1">
    <location>
        <position position="80"/>
    </location>
    <ligand>
        <name>substrate</name>
    </ligand>
</feature>
<feature type="binding site" evidence="1">
    <location>
        <position position="116"/>
    </location>
    <ligand>
        <name>ATP</name>
        <dbReference type="ChEBI" id="CHEBI:30616"/>
    </ligand>
</feature>
<feature type="binding site" evidence="1">
    <location>
        <position position="132"/>
    </location>
    <ligand>
        <name>substrate</name>
    </ligand>
</feature>